<dbReference type="EC" id="3.5.4.25"/>
<dbReference type="EMBL" id="AF022812">
    <property type="protein sequence ID" value="AAC60784.1"/>
    <property type="molecule type" value="Genomic_DNA"/>
</dbReference>
<dbReference type="SMR" id="O68248"/>
<dbReference type="STRING" id="1150621.SMUL_1527"/>
<dbReference type="UniPathway" id="UPA00275">
    <property type="reaction ID" value="UER00400"/>
</dbReference>
<dbReference type="GO" id="GO:0005829">
    <property type="term" value="C:cytosol"/>
    <property type="evidence" value="ECO:0007669"/>
    <property type="project" value="TreeGrafter"/>
</dbReference>
<dbReference type="GO" id="GO:0005525">
    <property type="term" value="F:GTP binding"/>
    <property type="evidence" value="ECO:0007669"/>
    <property type="project" value="UniProtKB-KW"/>
</dbReference>
<dbReference type="GO" id="GO:0003935">
    <property type="term" value="F:GTP cyclohydrolase II activity"/>
    <property type="evidence" value="ECO:0007669"/>
    <property type="project" value="UniProtKB-EC"/>
</dbReference>
<dbReference type="GO" id="GO:0046872">
    <property type="term" value="F:metal ion binding"/>
    <property type="evidence" value="ECO:0007669"/>
    <property type="project" value="UniProtKB-KW"/>
</dbReference>
<dbReference type="GO" id="GO:0009231">
    <property type="term" value="P:riboflavin biosynthetic process"/>
    <property type="evidence" value="ECO:0007669"/>
    <property type="project" value="UniProtKB-UniPathway"/>
</dbReference>
<dbReference type="CDD" id="cd00641">
    <property type="entry name" value="GTP_cyclohydro2"/>
    <property type="match status" value="1"/>
</dbReference>
<dbReference type="Gene3D" id="3.40.50.10990">
    <property type="entry name" value="GTP cyclohydrolase II"/>
    <property type="match status" value="1"/>
</dbReference>
<dbReference type="InterPro" id="IPR032677">
    <property type="entry name" value="GTP_cyclohydro_II"/>
</dbReference>
<dbReference type="InterPro" id="IPR000926">
    <property type="entry name" value="RibA"/>
</dbReference>
<dbReference type="InterPro" id="IPR036144">
    <property type="entry name" value="RibA-like_sf"/>
</dbReference>
<dbReference type="NCBIfam" id="NF001591">
    <property type="entry name" value="PRK00393.1"/>
    <property type="match status" value="1"/>
</dbReference>
<dbReference type="NCBIfam" id="TIGR00505">
    <property type="entry name" value="ribA"/>
    <property type="match status" value="1"/>
</dbReference>
<dbReference type="PANTHER" id="PTHR21327:SF18">
    <property type="entry name" value="3,4-DIHYDROXY-2-BUTANONE 4-PHOSPHATE SYNTHASE"/>
    <property type="match status" value="1"/>
</dbReference>
<dbReference type="PANTHER" id="PTHR21327">
    <property type="entry name" value="GTP CYCLOHYDROLASE II-RELATED"/>
    <property type="match status" value="1"/>
</dbReference>
<dbReference type="Pfam" id="PF00925">
    <property type="entry name" value="GTP_cyclohydro2"/>
    <property type="match status" value="1"/>
</dbReference>
<dbReference type="SUPFAM" id="SSF142695">
    <property type="entry name" value="RibA-like"/>
    <property type="match status" value="1"/>
</dbReference>
<protein>
    <recommendedName>
        <fullName>GTP cyclohydrolase-2</fullName>
        <ecNumber>3.5.4.25</ecNumber>
    </recommendedName>
    <alternativeName>
        <fullName>GTP cyclohydrolase II</fullName>
    </alternativeName>
</protein>
<proteinExistence type="inferred from homology"/>
<evidence type="ECO:0000250" key="1"/>
<evidence type="ECO:0000255" key="2"/>
<evidence type="ECO:0000305" key="3"/>
<accession>O68248</accession>
<sequence length="141" mass="16138">HSECLTGDALGSLKCDCGEQLEFALQNISLLGGMIIYLRQEGRNIGLFNKVNAYALQDQGFDTIEANHQLGFKSDERSYEVVETILEHFKIDKIRLLTNNPKKMSCLKNIMIIERWPIIIPSNNHNVDYLKTKKEMMGHLL</sequence>
<organism>
    <name type="scientific">Sulfurospirillum multivorans</name>
    <name type="common">Dehalospirillum multivorans</name>
    <dbReference type="NCBI Taxonomy" id="66821"/>
    <lineage>
        <taxon>Bacteria</taxon>
        <taxon>Pseudomonadati</taxon>
        <taxon>Campylobacterota</taxon>
        <taxon>Epsilonproteobacteria</taxon>
        <taxon>Campylobacterales</taxon>
        <taxon>Sulfurospirillaceae</taxon>
        <taxon>Sulfurospirillum</taxon>
    </lineage>
</organism>
<name>RIBA_SULMU</name>
<reference key="1">
    <citation type="journal article" date="1998" name="J. Bacteriol.">
        <title>Tetrachloroethene dehalogenase from Dehalospirillum multivorans: cloning, sequencing of the encoding genes, and expression of the pceA gene in Escherichia coli.</title>
        <authorList>
            <person name="Neumann A."/>
            <person name="Wohlfarth G."/>
            <person name="Diekert G."/>
        </authorList>
    </citation>
    <scope>NUCLEOTIDE SEQUENCE [GENOMIC DNA]</scope>
</reference>
<feature type="chain" id="PRO_0000151753" description="GTP cyclohydrolase-2">
    <location>
        <begin position="1" status="less than"/>
        <end position="141"/>
    </location>
</feature>
<feature type="active site" description="Proton acceptor" evidence="2">
    <location>
        <position position="75"/>
    </location>
</feature>
<feature type="active site" description="Nucleophile" evidence="1">
    <location>
        <position position="77"/>
    </location>
</feature>
<feature type="binding site" evidence="1">
    <location>
        <begin position="1" status="less than"/>
        <end position="3"/>
    </location>
    <ligand>
        <name>GTP</name>
        <dbReference type="ChEBI" id="CHEBI:37565"/>
    </ligand>
</feature>
<feature type="binding site" evidence="1">
    <location>
        <position position="4"/>
    </location>
    <ligand>
        <name>Zn(2+)</name>
        <dbReference type="ChEBI" id="CHEBI:29105"/>
        <note>catalytic</note>
    </ligand>
</feature>
<feature type="binding site" evidence="1">
    <location>
        <position position="15"/>
    </location>
    <ligand>
        <name>Zn(2+)</name>
        <dbReference type="ChEBI" id="CHEBI:29105"/>
        <note>catalytic</note>
    </ligand>
</feature>
<feature type="binding site" evidence="1">
    <location>
        <position position="17"/>
    </location>
    <ligand>
        <name>Zn(2+)</name>
        <dbReference type="ChEBI" id="CHEBI:29105"/>
        <note>catalytic</note>
    </ligand>
</feature>
<feature type="binding site" evidence="1">
    <location>
        <position position="20"/>
    </location>
    <ligand>
        <name>GTP</name>
        <dbReference type="ChEBI" id="CHEBI:37565"/>
    </ligand>
</feature>
<feature type="binding site" evidence="1">
    <location>
        <begin position="41"/>
        <end position="43"/>
    </location>
    <ligand>
        <name>GTP</name>
        <dbReference type="ChEBI" id="CHEBI:37565"/>
    </ligand>
</feature>
<feature type="binding site" evidence="1">
    <location>
        <position position="63"/>
    </location>
    <ligand>
        <name>GTP</name>
        <dbReference type="ChEBI" id="CHEBI:37565"/>
    </ligand>
</feature>
<feature type="binding site" evidence="1">
    <location>
        <position position="98"/>
    </location>
    <ligand>
        <name>GTP</name>
        <dbReference type="ChEBI" id="CHEBI:37565"/>
    </ligand>
</feature>
<feature type="binding site" evidence="1">
    <location>
        <position position="103"/>
    </location>
    <ligand>
        <name>GTP</name>
        <dbReference type="ChEBI" id="CHEBI:37565"/>
    </ligand>
</feature>
<feature type="non-terminal residue">
    <location>
        <position position="1"/>
    </location>
</feature>
<comment type="function">
    <text evidence="1">Catalyzes the conversion of GTP to 2,5-diamino-6-ribosylamino-4(3H)-pyrimidinone 5'-phosphate (DARP), formate and pyrophosphate.</text>
</comment>
<comment type="catalytic activity">
    <reaction>
        <text>GTP + 4 H2O = 2,5-diamino-6-hydroxy-4-(5-phosphoribosylamino)-pyrimidine + formate + 2 phosphate + 3 H(+)</text>
        <dbReference type="Rhea" id="RHEA:23704"/>
        <dbReference type="ChEBI" id="CHEBI:15377"/>
        <dbReference type="ChEBI" id="CHEBI:15378"/>
        <dbReference type="ChEBI" id="CHEBI:15740"/>
        <dbReference type="ChEBI" id="CHEBI:37565"/>
        <dbReference type="ChEBI" id="CHEBI:43474"/>
        <dbReference type="ChEBI" id="CHEBI:58614"/>
        <dbReference type="EC" id="3.5.4.25"/>
    </reaction>
</comment>
<comment type="cofactor">
    <cofactor evidence="1">
        <name>Zn(2+)</name>
        <dbReference type="ChEBI" id="CHEBI:29105"/>
    </cofactor>
    <text evidence="1">Binds 1 zinc ion per subunit.</text>
</comment>
<comment type="pathway">
    <text>Cofactor biosynthesis; riboflavin biosynthesis; 5-amino-6-(D-ribitylamino)uracil from GTP: step 1/4.</text>
</comment>
<comment type="similarity">
    <text evidence="3">Belongs to the GTP cyclohydrolase II family.</text>
</comment>
<keyword id="KW-0342">GTP-binding</keyword>
<keyword id="KW-0378">Hydrolase</keyword>
<keyword id="KW-0479">Metal-binding</keyword>
<keyword id="KW-0547">Nucleotide-binding</keyword>
<keyword id="KW-0686">Riboflavin biosynthesis</keyword>
<keyword id="KW-0862">Zinc</keyword>
<gene>
    <name type="primary">ribA</name>
</gene>